<reference key="1">
    <citation type="submission" date="2005-08" db="EMBL/GenBank/DDBJ databases">
        <title>Complete sequence of chromosome 1 of Nitrosospira multiformis ATCC 25196.</title>
        <authorList>
            <person name="Copeland A."/>
            <person name="Lucas S."/>
            <person name="Lapidus A."/>
            <person name="Barry K."/>
            <person name="Detter J.C."/>
            <person name="Glavina T."/>
            <person name="Hammon N."/>
            <person name="Israni S."/>
            <person name="Pitluck S."/>
            <person name="Chain P."/>
            <person name="Malfatti S."/>
            <person name="Shin M."/>
            <person name="Vergez L."/>
            <person name="Schmutz J."/>
            <person name="Larimer F."/>
            <person name="Land M."/>
            <person name="Hauser L."/>
            <person name="Kyrpides N."/>
            <person name="Lykidis A."/>
            <person name="Richardson P."/>
        </authorList>
    </citation>
    <scope>NUCLEOTIDE SEQUENCE [LARGE SCALE GENOMIC DNA]</scope>
    <source>
        <strain>ATCC 25196 / NCIMB 11849 / C 71</strain>
    </source>
</reference>
<proteinExistence type="inferred from homology"/>
<protein>
    <recommendedName>
        <fullName evidence="1">Inner membrane-spanning protein YciB</fullName>
    </recommendedName>
</protein>
<name>YCIB_NITMU</name>
<evidence type="ECO:0000255" key="1">
    <source>
        <dbReference type="HAMAP-Rule" id="MF_00189"/>
    </source>
</evidence>
<feature type="chain" id="PRO_1000021035" description="Inner membrane-spanning protein YciB">
    <location>
        <begin position="1"/>
        <end position="181"/>
    </location>
</feature>
<feature type="transmembrane region" description="Helical" evidence="1">
    <location>
        <begin position="3"/>
        <end position="23"/>
    </location>
</feature>
<feature type="transmembrane region" description="Helical" evidence="1">
    <location>
        <begin position="49"/>
        <end position="69"/>
    </location>
</feature>
<feature type="transmembrane region" description="Helical" evidence="1">
    <location>
        <begin position="76"/>
        <end position="96"/>
    </location>
</feature>
<feature type="transmembrane region" description="Helical" evidence="1">
    <location>
        <begin position="119"/>
        <end position="139"/>
    </location>
</feature>
<feature type="transmembrane region" description="Helical" evidence="1">
    <location>
        <begin position="149"/>
        <end position="169"/>
    </location>
</feature>
<keyword id="KW-0997">Cell inner membrane</keyword>
<keyword id="KW-1003">Cell membrane</keyword>
<keyword id="KW-0472">Membrane</keyword>
<keyword id="KW-1185">Reference proteome</keyword>
<keyword id="KW-0812">Transmembrane</keyword>
<keyword id="KW-1133">Transmembrane helix</keyword>
<dbReference type="EMBL" id="CP000103">
    <property type="protein sequence ID" value="ABB75404.1"/>
    <property type="molecule type" value="Genomic_DNA"/>
</dbReference>
<dbReference type="RefSeq" id="WP_011381413.1">
    <property type="nucleotide sequence ID" value="NC_007614.1"/>
</dbReference>
<dbReference type="STRING" id="323848.Nmul_A2111"/>
<dbReference type="KEGG" id="nmu:Nmul_A2111"/>
<dbReference type="eggNOG" id="COG2917">
    <property type="taxonomic scope" value="Bacteria"/>
</dbReference>
<dbReference type="HOGENOM" id="CLU_089554_2_0_4"/>
<dbReference type="OrthoDB" id="9788219at2"/>
<dbReference type="Proteomes" id="UP000002718">
    <property type="component" value="Chromosome"/>
</dbReference>
<dbReference type="GO" id="GO:0005886">
    <property type="term" value="C:plasma membrane"/>
    <property type="evidence" value="ECO:0007669"/>
    <property type="project" value="UniProtKB-SubCell"/>
</dbReference>
<dbReference type="HAMAP" id="MF_00189">
    <property type="entry name" value="YciB"/>
    <property type="match status" value="1"/>
</dbReference>
<dbReference type="InterPro" id="IPR006008">
    <property type="entry name" value="YciB"/>
</dbReference>
<dbReference type="NCBIfam" id="TIGR00997">
    <property type="entry name" value="ispZ"/>
    <property type="match status" value="1"/>
</dbReference>
<dbReference type="NCBIfam" id="NF001325">
    <property type="entry name" value="PRK00259.1-3"/>
    <property type="match status" value="1"/>
</dbReference>
<dbReference type="PANTHER" id="PTHR36917:SF1">
    <property type="entry name" value="INNER MEMBRANE-SPANNING PROTEIN YCIB"/>
    <property type="match status" value="1"/>
</dbReference>
<dbReference type="PANTHER" id="PTHR36917">
    <property type="entry name" value="INTRACELLULAR SEPTATION PROTEIN A-RELATED"/>
    <property type="match status" value="1"/>
</dbReference>
<dbReference type="Pfam" id="PF04279">
    <property type="entry name" value="IspA"/>
    <property type="match status" value="1"/>
</dbReference>
<accession>Q2Y767</accession>
<organism>
    <name type="scientific">Nitrosospira multiformis (strain ATCC 25196 / NCIMB 11849 / C 71)</name>
    <dbReference type="NCBI Taxonomy" id="323848"/>
    <lineage>
        <taxon>Bacteria</taxon>
        <taxon>Pseudomonadati</taxon>
        <taxon>Pseudomonadota</taxon>
        <taxon>Betaproteobacteria</taxon>
        <taxon>Nitrosomonadales</taxon>
        <taxon>Nitrosomonadaceae</taxon>
        <taxon>Nitrosospira</taxon>
    </lineage>
</organism>
<gene>
    <name evidence="1" type="primary">yciB</name>
    <name type="ordered locus">Nmul_A2111</name>
</gene>
<sequence>MKFLFDLFPVILFFITFKIYGIYAATAVAIGATFAQIGWVWFRHGKVDTMLWVSLVLIVVFGSATLILQDETFIKWKPSVLYWLFAAALLIAQAIFKKNFIRTMMKEQLTLPEPVWARVNASWAAFFAFMGAANLYVAFNYSTETWVNFKLFGFMGLMLVFVVLQGLMLSKYMATDEDKEA</sequence>
<comment type="function">
    <text evidence="1">Plays a role in cell envelope biogenesis, maintenance of cell envelope integrity and membrane homeostasis.</text>
</comment>
<comment type="subcellular location">
    <subcellularLocation>
        <location evidence="1">Cell inner membrane</location>
        <topology evidence="1">Multi-pass membrane protein</topology>
    </subcellularLocation>
</comment>
<comment type="similarity">
    <text evidence="1">Belongs to the YciB family.</text>
</comment>